<keyword id="KW-0227">DNA damage</keyword>
<keyword id="KW-0234">DNA repair</keyword>
<keyword id="KW-1048">Host nucleus</keyword>
<keyword id="KW-0378">Hydrolase</keyword>
<keyword id="KW-1185">Reference proteome</keyword>
<comment type="function">
    <text evidence="1">Excises uracil residues from the DNA which can arise as a result of misincorporation of dUMP residues by DNA polymerase or deamination of cytosines. Therefore may reduce deleterious uracil incorporation into the viral genome, particularly in terminally differentiated cells which lack DNA repair enzymes.</text>
</comment>
<comment type="catalytic activity">
    <reaction evidence="1">
        <text>Hydrolyzes single-stranded DNA or mismatched double-stranded DNA and polynucleotides, releasing free uracil.</text>
        <dbReference type="EC" id="3.2.2.27"/>
    </reaction>
</comment>
<comment type="subcellular location">
    <subcellularLocation>
        <location evidence="1">Host nucleus</location>
    </subcellularLocation>
</comment>
<comment type="similarity">
    <text evidence="1">Belongs to the uracil-DNA glycosylase (UDG) superfamily. UNG family.</text>
</comment>
<sequence>MEEWLRKHMWPALPDHQHHPSYDILLAEPWVQFLDMTPFFRQKLYNTLSKINEMRKSCIIYPPQAEIMSWSYLCAPEDVKVVIIGQDPYHGGQANGQAFSVNKGFPVPPSLQNIFKEVRSCYPDFVSPGHGCLEEWGRQGVLLLNTILTVEAKKPGSHSDLGWTWFTNLIISTLSNKLNNCVFMLWGSKAIAKSLMINKQRHLVLKAQHPSPLAAKNNYSSSQCKFLGCGHFLTANKYLTQHNKVPIDWTLE</sequence>
<gene>
    <name type="primary">46</name>
</gene>
<evidence type="ECO:0000255" key="1">
    <source>
        <dbReference type="HAMAP-Rule" id="MF_04046"/>
    </source>
</evidence>
<feature type="chain" id="PRO_0000405711" description="Uracil-DNA glycosylase">
    <location>
        <begin position="1"/>
        <end position="252"/>
    </location>
</feature>
<feature type="active site" description="Proton acceptor" evidence="1">
    <location>
        <position position="87"/>
    </location>
</feature>
<reference key="1">
    <citation type="journal article" date="1997" name="J. Virol.">
        <title>Primary structure of the alcelaphine herpesvirus 1 genome.</title>
        <authorList>
            <person name="Ensser A."/>
            <person name="Pflanz R."/>
            <person name="Fleckenstein B."/>
        </authorList>
    </citation>
    <scope>NUCLEOTIDE SEQUENCE [LARGE SCALE GENOMIC DNA]</scope>
</reference>
<name>UNG_ALHV1</name>
<organism>
    <name type="scientific">Alcelaphine herpesvirus 1 (strain C500)</name>
    <name type="common">AlHV-1</name>
    <name type="synonym">Malignant catarrhal fever virus</name>
    <dbReference type="NCBI Taxonomy" id="654901"/>
    <lineage>
        <taxon>Viruses</taxon>
        <taxon>Duplodnaviria</taxon>
        <taxon>Heunggongvirae</taxon>
        <taxon>Peploviricota</taxon>
        <taxon>Herviviricetes</taxon>
        <taxon>Herpesvirales</taxon>
        <taxon>Orthoherpesviridae</taxon>
        <taxon>Gammaherpesvirinae</taxon>
        <taxon>Macavirus</taxon>
        <taxon>Macavirus alcelaphinegamma1</taxon>
    </lineage>
</organism>
<dbReference type="EC" id="3.2.2.27" evidence="1"/>
<dbReference type="EMBL" id="AF005370">
    <property type="protein sequence ID" value="AAC58092.1"/>
    <property type="molecule type" value="Genomic_DNA"/>
</dbReference>
<dbReference type="PIR" id="T03140">
    <property type="entry name" value="T03140"/>
</dbReference>
<dbReference type="RefSeq" id="NP_065544.1">
    <property type="nucleotide sequence ID" value="NC_002531.1"/>
</dbReference>
<dbReference type="SMR" id="O36395"/>
<dbReference type="KEGG" id="vg:911736"/>
<dbReference type="Proteomes" id="UP000000941">
    <property type="component" value="Segment"/>
</dbReference>
<dbReference type="GO" id="GO:0042025">
    <property type="term" value="C:host cell nucleus"/>
    <property type="evidence" value="ECO:0007669"/>
    <property type="project" value="UniProtKB-SubCell"/>
</dbReference>
<dbReference type="GO" id="GO:0004844">
    <property type="term" value="F:uracil DNA N-glycosylase activity"/>
    <property type="evidence" value="ECO:0007669"/>
    <property type="project" value="UniProtKB-EC"/>
</dbReference>
<dbReference type="GO" id="GO:0097510">
    <property type="term" value="P:base-excision repair, AP site formation via deaminated base removal"/>
    <property type="evidence" value="ECO:0007669"/>
    <property type="project" value="TreeGrafter"/>
</dbReference>
<dbReference type="CDD" id="cd10027">
    <property type="entry name" value="UDG-F1-like"/>
    <property type="match status" value="1"/>
</dbReference>
<dbReference type="Gene3D" id="3.40.470.10">
    <property type="entry name" value="Uracil-DNA glycosylase-like domain"/>
    <property type="match status" value="1"/>
</dbReference>
<dbReference type="HAMAP" id="MF_00148">
    <property type="entry name" value="UDG"/>
    <property type="match status" value="1"/>
</dbReference>
<dbReference type="InterPro" id="IPR002043">
    <property type="entry name" value="UDG_fam1"/>
</dbReference>
<dbReference type="InterPro" id="IPR018085">
    <property type="entry name" value="Ura-DNA_Glyclase_AS"/>
</dbReference>
<dbReference type="InterPro" id="IPR005122">
    <property type="entry name" value="Uracil-DNA_glycosylase-like"/>
</dbReference>
<dbReference type="InterPro" id="IPR036895">
    <property type="entry name" value="Uracil-DNA_glycosylase-like_sf"/>
</dbReference>
<dbReference type="NCBIfam" id="NF003589">
    <property type="entry name" value="PRK05254.1-2"/>
    <property type="match status" value="1"/>
</dbReference>
<dbReference type="NCBIfam" id="NF003592">
    <property type="entry name" value="PRK05254.1-5"/>
    <property type="match status" value="1"/>
</dbReference>
<dbReference type="NCBIfam" id="TIGR00628">
    <property type="entry name" value="ung"/>
    <property type="match status" value="1"/>
</dbReference>
<dbReference type="PANTHER" id="PTHR11264">
    <property type="entry name" value="URACIL-DNA GLYCOSYLASE"/>
    <property type="match status" value="1"/>
</dbReference>
<dbReference type="PANTHER" id="PTHR11264:SF0">
    <property type="entry name" value="URACIL-DNA GLYCOSYLASE"/>
    <property type="match status" value="1"/>
</dbReference>
<dbReference type="Pfam" id="PF03167">
    <property type="entry name" value="UDG"/>
    <property type="match status" value="1"/>
</dbReference>
<dbReference type="SMART" id="SM00986">
    <property type="entry name" value="UDG"/>
    <property type="match status" value="1"/>
</dbReference>
<dbReference type="SMART" id="SM00987">
    <property type="entry name" value="UreE_C"/>
    <property type="match status" value="1"/>
</dbReference>
<dbReference type="SUPFAM" id="SSF52141">
    <property type="entry name" value="Uracil-DNA glycosylase-like"/>
    <property type="match status" value="1"/>
</dbReference>
<dbReference type="PROSITE" id="PS00130">
    <property type="entry name" value="U_DNA_GLYCOSYLASE"/>
    <property type="match status" value="1"/>
</dbReference>
<accession>O36395</accession>
<protein>
    <recommendedName>
        <fullName evidence="1">Uracil-DNA glycosylase</fullName>
        <shortName evidence="1">UDG</shortName>
        <ecNumber evidence="1">3.2.2.27</ecNumber>
    </recommendedName>
    <alternativeName>
        <fullName evidence="1">UNG</fullName>
    </alternativeName>
</protein>
<proteinExistence type="inferred from homology"/>
<organismHost>
    <name type="scientific">Connochaetes taurinus</name>
    <name type="common">Blue wildebeest</name>
    <dbReference type="NCBI Taxonomy" id="9927"/>
</organismHost>